<sequence length="267" mass="28502">MQPESAMTPALEVTVLVSIGRHPLTGRVRRADQDARGVELARSLADAEVRLLHAGECNESSEAALRGYLGMGFSELALIEQPEGADVLPALAEALDATSPHLVITGERAERGEGSGLLPYLLAERLGWPLVSGLAAVESVEDGMATLLQALPRGQRRRLKIRLPAIVTVDDAAPTPRQSAYGPARRGTLESSAGEVCNDDEWATWQVQPARPRPKRLKIVKAASARDRFKAAAAKAEGTGGQVLTDVTPTQGAEAILTLLRDEEVLR</sequence>
<reference key="1">
    <citation type="journal article" date="2011" name="Stand. Genomic Sci.">
        <title>Complete genome sequence of the halophilic and highly halotolerant Chromohalobacter salexigens type strain (1H11(T)).</title>
        <authorList>
            <person name="Copeland A."/>
            <person name="O'Connor K."/>
            <person name="Lucas S."/>
            <person name="Lapidus A."/>
            <person name="Berry K.W."/>
            <person name="Detter J.C."/>
            <person name="Del Rio T.G."/>
            <person name="Hammon N."/>
            <person name="Dalin E."/>
            <person name="Tice H."/>
            <person name="Pitluck S."/>
            <person name="Bruce D."/>
            <person name="Goodwin L."/>
            <person name="Han C."/>
            <person name="Tapia R."/>
            <person name="Saunders E."/>
            <person name="Schmutz J."/>
            <person name="Brettin T."/>
            <person name="Larimer F."/>
            <person name="Land M."/>
            <person name="Hauser L."/>
            <person name="Vargas C."/>
            <person name="Nieto J.J."/>
            <person name="Kyrpides N.C."/>
            <person name="Ivanova N."/>
            <person name="Goker M."/>
            <person name="Klenk H.P."/>
            <person name="Csonka L.N."/>
            <person name="Woyke T."/>
        </authorList>
    </citation>
    <scope>NUCLEOTIDE SEQUENCE [LARGE SCALE GENOMIC DNA]</scope>
    <source>
        <strain>ATCC BAA-138 / DSM 3043 / CIP 106854 / NCIMB 13768 / 1H11</strain>
    </source>
</reference>
<reference key="2">
    <citation type="journal article" date="2020" name="Appl. Environ. Microbiol.">
        <title>Role of N,N-dimethylglycine and its catabolism to sarcosine in Chromohalobacter salexigens DSM 3043.</title>
        <authorList>
            <person name="Yang T."/>
            <person name="Shao Y.H."/>
            <person name="Guo L.Z."/>
            <person name="Meng X.L."/>
            <person name="Yu H."/>
            <person name="Lu W.D."/>
        </authorList>
    </citation>
    <scope>FUNCTION</scope>
    <scope>DISRUPTION PHENOTYPE</scope>
    <source>
        <strain>ATCC BAA-138 / DSM 3043 / CIP 106854 / NCIMB 13768 / 1H11</strain>
    </source>
</reference>
<evidence type="ECO:0000250" key="1">
    <source>
        <dbReference type="UniProtKB" id="P53570"/>
    </source>
</evidence>
<evidence type="ECO:0000269" key="2">
    <source>
    </source>
</evidence>
<evidence type="ECO:0000303" key="3">
    <source>
    </source>
</evidence>
<evidence type="ECO:0000305" key="4"/>
<evidence type="ECO:0000312" key="5">
    <source>
        <dbReference type="EMBL" id="ABE58350.1"/>
    </source>
</evidence>
<organism>
    <name type="scientific">Chromohalobacter salexigens (strain ATCC BAA-138 / DSM 3043 / CIP 106854 / NCIMB 13768 / 1H11)</name>
    <dbReference type="NCBI Taxonomy" id="290398"/>
    <lineage>
        <taxon>Bacteria</taxon>
        <taxon>Pseudomonadati</taxon>
        <taxon>Pseudomonadota</taxon>
        <taxon>Gammaproteobacteria</taxon>
        <taxon>Oceanospirillales</taxon>
        <taxon>Halomonadaceae</taxon>
        <taxon>Chromohalobacter</taxon>
    </lineage>
</organism>
<dbReference type="EMBL" id="CP000285">
    <property type="protein sequence ID" value="ABE58350.1"/>
    <property type="molecule type" value="Genomic_DNA"/>
</dbReference>
<dbReference type="RefSeq" id="WP_011506296.1">
    <property type="nucleotide sequence ID" value="NC_007963.1"/>
</dbReference>
<dbReference type="SMR" id="Q1QYV8"/>
<dbReference type="STRING" id="290398.Csal_0993"/>
<dbReference type="GeneID" id="95333748"/>
<dbReference type="KEGG" id="csa:Csal_0993"/>
<dbReference type="eggNOG" id="COG2086">
    <property type="taxonomic scope" value="Bacteria"/>
</dbReference>
<dbReference type="HOGENOM" id="CLU_091028_0_0_6"/>
<dbReference type="OrthoDB" id="5598152at2"/>
<dbReference type="Proteomes" id="UP000000239">
    <property type="component" value="Chromosome"/>
</dbReference>
<dbReference type="GO" id="GO:0009055">
    <property type="term" value="F:electron transfer activity"/>
    <property type="evidence" value="ECO:0007669"/>
    <property type="project" value="InterPro"/>
</dbReference>
<dbReference type="Gene3D" id="3.40.50.620">
    <property type="entry name" value="HUPs"/>
    <property type="match status" value="1"/>
</dbReference>
<dbReference type="InterPro" id="IPR014730">
    <property type="entry name" value="ETF_a/b_N"/>
</dbReference>
<dbReference type="InterPro" id="IPR012255">
    <property type="entry name" value="ETF_b"/>
</dbReference>
<dbReference type="InterPro" id="IPR014729">
    <property type="entry name" value="Rossmann-like_a/b/a_fold"/>
</dbReference>
<dbReference type="PANTHER" id="PTHR21294">
    <property type="entry name" value="ELECTRON TRANSFER FLAVOPROTEIN BETA-SUBUNIT"/>
    <property type="match status" value="1"/>
</dbReference>
<dbReference type="PANTHER" id="PTHR21294:SF8">
    <property type="entry name" value="ELECTRON TRANSFER FLAVOPROTEIN SUBUNIT BETA"/>
    <property type="match status" value="1"/>
</dbReference>
<dbReference type="Pfam" id="PF01012">
    <property type="entry name" value="ETF"/>
    <property type="match status" value="1"/>
</dbReference>
<dbReference type="SMART" id="SM00893">
    <property type="entry name" value="ETF"/>
    <property type="match status" value="1"/>
</dbReference>
<dbReference type="SUPFAM" id="SSF52402">
    <property type="entry name" value="Adenine nucleotide alpha hydrolases-like"/>
    <property type="match status" value="1"/>
</dbReference>
<accession>Q1QYV8</accession>
<protein>
    <recommendedName>
        <fullName evidence="4">Electron transfer flavoprotein subunit beta</fullName>
        <shortName evidence="4">Beta-ETF</shortName>
    </recommendedName>
</protein>
<name>ETFB_CHRSD</name>
<feature type="chain" id="PRO_0000459079" description="Electron transfer flavoprotein subunit beta">
    <location>
        <begin position="1"/>
        <end position="267"/>
    </location>
</feature>
<proteinExistence type="inferred from homology"/>
<comment type="function">
    <text evidence="2">Participates in the electron transfer process during N,N-dimethylglycine (DMG) degradation to sarcosine.</text>
</comment>
<comment type="subunit">
    <text evidence="1">Heterodimer of an alpha and a beta subunit.</text>
</comment>
<comment type="disruption phenotype">
    <text evidence="2">Deletion mutant loses its ability to grow using DMG as the sole nitrogen source but is still capable of utilizing sarcosine and glycine as the sole nitrogen source.</text>
</comment>
<comment type="similarity">
    <text evidence="4">Belongs to the ETF beta-subunit/FixA family.</text>
</comment>
<keyword id="KW-0249">Electron transport</keyword>
<keyword id="KW-1185">Reference proteome</keyword>
<keyword id="KW-0813">Transport</keyword>
<gene>
    <name evidence="3" type="primary">etfB</name>
    <name evidence="5" type="ordered locus">Csal_0993</name>
</gene>